<accession>P60299</accession>
<accession>Q99VD1</accession>
<keyword id="KW-0028">Amino-acid biosynthesis</keyword>
<keyword id="KW-0032">Aminotransferase</keyword>
<keyword id="KW-0963">Cytoplasm</keyword>
<keyword id="KW-0641">Proline biosynthesis</keyword>
<keyword id="KW-0663">Pyridoxal phosphate</keyword>
<keyword id="KW-0808">Transferase</keyword>
<feature type="chain" id="PRO_0000112791" description="Ornithine aminotransferase 2">
    <location>
        <begin position="1"/>
        <end position="396"/>
    </location>
</feature>
<feature type="modified residue" description="N6-(pyridoxal phosphate)lysine" evidence="1">
    <location>
        <position position="255"/>
    </location>
</feature>
<evidence type="ECO:0000255" key="1">
    <source>
        <dbReference type="HAMAP-Rule" id="MF_01689"/>
    </source>
</evidence>
<sequence>MTKSEKIIELTNHYGAHNYLPLPIVISEAEGVWVKDPEGNKYMDMLSAYSAVNQGHRHPKIIQALKDQADKVTLVSRAFHSDNLGEWYEKICKLAGKDKALPMNTGAEAVETALKAARRWAYDVKGIEPNKAEIIAFNGNFHGRTMAPVSLSSEAEYQRGYGPLLDGFRKVDFGDVDALKAAINENTAAVLVEPIQGEAGINIPPEGYLKAIRELCDEHNVLFIADEIQAGLGRSGKLFATDWDNVKPDVYILGKALGGGVFPISVVLADKEVLDVFTPGSHGSTFGGNPLACAASIAALDVIVDEDLPGRSLELGDYFKEQLKQIDHPSIKEVRGRGLFIGVELNESARPYCEALKEEGLLCKETHDTVIRFAPPLIITKEELDLALEKIRHVFQ</sequence>
<organism>
    <name type="scientific">Staphylococcus aureus (strain MW2)</name>
    <dbReference type="NCBI Taxonomy" id="196620"/>
    <lineage>
        <taxon>Bacteria</taxon>
        <taxon>Bacillati</taxon>
        <taxon>Bacillota</taxon>
        <taxon>Bacilli</taxon>
        <taxon>Bacillales</taxon>
        <taxon>Staphylococcaceae</taxon>
        <taxon>Staphylococcus</taxon>
    </lineage>
</organism>
<gene>
    <name evidence="1" type="primary">rocD2</name>
    <name type="ordered locus">MW0839</name>
</gene>
<protein>
    <recommendedName>
        <fullName evidence="1">Ornithine aminotransferase 2</fullName>
        <shortName evidence="1">OAT 2</shortName>
        <ecNumber evidence="1">2.6.1.13</ecNumber>
    </recommendedName>
    <alternativeName>
        <fullName evidence="1">Ornithine--oxo-acid aminotransferase 2</fullName>
    </alternativeName>
</protein>
<comment type="function">
    <text evidence="1">Catalyzes the interconversion of ornithine to glutamate semialdehyde.</text>
</comment>
<comment type="catalytic activity">
    <reaction evidence="1">
        <text>a 2-oxocarboxylate + L-ornithine = L-glutamate 5-semialdehyde + an L-alpha-amino acid</text>
        <dbReference type="Rhea" id="RHEA:13877"/>
        <dbReference type="ChEBI" id="CHEBI:35179"/>
        <dbReference type="ChEBI" id="CHEBI:46911"/>
        <dbReference type="ChEBI" id="CHEBI:58066"/>
        <dbReference type="ChEBI" id="CHEBI:59869"/>
        <dbReference type="EC" id="2.6.1.13"/>
    </reaction>
</comment>
<comment type="cofactor">
    <cofactor evidence="1">
        <name>pyridoxal 5'-phosphate</name>
        <dbReference type="ChEBI" id="CHEBI:597326"/>
    </cofactor>
</comment>
<comment type="pathway">
    <text evidence="1">Amino-acid biosynthesis; L-proline biosynthesis; L-glutamate 5-semialdehyde from L-ornithine: step 1/1.</text>
</comment>
<comment type="subcellular location">
    <subcellularLocation>
        <location evidence="1">Cytoplasm</location>
    </subcellularLocation>
</comment>
<comment type="similarity">
    <text evidence="1">Belongs to the class-III pyridoxal-phosphate-dependent aminotransferase family. OAT subfamily.</text>
</comment>
<name>OAT2_STAAW</name>
<reference key="1">
    <citation type="journal article" date="2002" name="Lancet">
        <title>Genome and virulence determinants of high virulence community-acquired MRSA.</title>
        <authorList>
            <person name="Baba T."/>
            <person name="Takeuchi F."/>
            <person name="Kuroda M."/>
            <person name="Yuzawa H."/>
            <person name="Aoki K."/>
            <person name="Oguchi A."/>
            <person name="Nagai Y."/>
            <person name="Iwama N."/>
            <person name="Asano K."/>
            <person name="Naimi T."/>
            <person name="Kuroda H."/>
            <person name="Cui L."/>
            <person name="Yamamoto K."/>
            <person name="Hiramatsu K."/>
        </authorList>
    </citation>
    <scope>NUCLEOTIDE SEQUENCE [LARGE SCALE GENOMIC DNA]</scope>
    <source>
        <strain>MW2</strain>
    </source>
</reference>
<proteinExistence type="inferred from homology"/>
<dbReference type="EC" id="2.6.1.13" evidence="1"/>
<dbReference type="EMBL" id="BA000033">
    <property type="protein sequence ID" value="BAB94704.1"/>
    <property type="molecule type" value="Genomic_DNA"/>
</dbReference>
<dbReference type="RefSeq" id="WP_000167314.1">
    <property type="nucleotide sequence ID" value="NC_003923.1"/>
</dbReference>
<dbReference type="SMR" id="P60299"/>
<dbReference type="KEGG" id="sam:MW0839"/>
<dbReference type="HOGENOM" id="CLU_016922_10_1_9"/>
<dbReference type="UniPathway" id="UPA00098">
    <property type="reaction ID" value="UER00358"/>
</dbReference>
<dbReference type="GO" id="GO:0005737">
    <property type="term" value="C:cytoplasm"/>
    <property type="evidence" value="ECO:0007669"/>
    <property type="project" value="UniProtKB-SubCell"/>
</dbReference>
<dbReference type="GO" id="GO:0042802">
    <property type="term" value="F:identical protein binding"/>
    <property type="evidence" value="ECO:0007669"/>
    <property type="project" value="TreeGrafter"/>
</dbReference>
<dbReference type="GO" id="GO:0004587">
    <property type="term" value="F:ornithine aminotransferase activity"/>
    <property type="evidence" value="ECO:0007669"/>
    <property type="project" value="UniProtKB-UniRule"/>
</dbReference>
<dbReference type="GO" id="GO:0030170">
    <property type="term" value="F:pyridoxal phosphate binding"/>
    <property type="evidence" value="ECO:0007669"/>
    <property type="project" value="UniProtKB-UniRule"/>
</dbReference>
<dbReference type="GO" id="GO:0055129">
    <property type="term" value="P:L-proline biosynthetic process"/>
    <property type="evidence" value="ECO:0007669"/>
    <property type="project" value="UniProtKB-UniRule"/>
</dbReference>
<dbReference type="CDD" id="cd00610">
    <property type="entry name" value="OAT_like"/>
    <property type="match status" value="1"/>
</dbReference>
<dbReference type="FunFam" id="3.40.640.10:FF:000011">
    <property type="entry name" value="Ornithine aminotransferase"/>
    <property type="match status" value="1"/>
</dbReference>
<dbReference type="Gene3D" id="3.90.1150.10">
    <property type="entry name" value="Aspartate Aminotransferase, domain 1"/>
    <property type="match status" value="1"/>
</dbReference>
<dbReference type="Gene3D" id="3.40.640.10">
    <property type="entry name" value="Type I PLP-dependent aspartate aminotransferase-like (Major domain)"/>
    <property type="match status" value="1"/>
</dbReference>
<dbReference type="HAMAP" id="MF_01689">
    <property type="entry name" value="Ornith_aminotrans_3"/>
    <property type="match status" value="1"/>
</dbReference>
<dbReference type="InterPro" id="IPR005814">
    <property type="entry name" value="Aminotrans_3"/>
</dbReference>
<dbReference type="InterPro" id="IPR049704">
    <property type="entry name" value="Aminotrans_3_PPA_site"/>
</dbReference>
<dbReference type="InterPro" id="IPR050103">
    <property type="entry name" value="Class-III_PLP-dep_AT"/>
</dbReference>
<dbReference type="InterPro" id="IPR010164">
    <property type="entry name" value="Orn_aminotrans"/>
</dbReference>
<dbReference type="InterPro" id="IPR034757">
    <property type="entry name" value="Ornith_aminotrans_bact"/>
</dbReference>
<dbReference type="InterPro" id="IPR015424">
    <property type="entry name" value="PyrdxlP-dep_Trfase"/>
</dbReference>
<dbReference type="InterPro" id="IPR015421">
    <property type="entry name" value="PyrdxlP-dep_Trfase_major"/>
</dbReference>
<dbReference type="InterPro" id="IPR015422">
    <property type="entry name" value="PyrdxlP-dep_Trfase_small"/>
</dbReference>
<dbReference type="NCBIfam" id="TIGR01885">
    <property type="entry name" value="Orn_aminotrans"/>
    <property type="match status" value="1"/>
</dbReference>
<dbReference type="NCBIfam" id="NF002325">
    <property type="entry name" value="PRK01278.1"/>
    <property type="match status" value="1"/>
</dbReference>
<dbReference type="NCBIfam" id="NF003145">
    <property type="entry name" value="PRK04073.1"/>
    <property type="match status" value="1"/>
</dbReference>
<dbReference type="PANTHER" id="PTHR11986">
    <property type="entry name" value="AMINOTRANSFERASE CLASS III"/>
    <property type="match status" value="1"/>
</dbReference>
<dbReference type="PANTHER" id="PTHR11986:SF18">
    <property type="entry name" value="ORNITHINE AMINOTRANSFERASE, MITOCHONDRIAL"/>
    <property type="match status" value="1"/>
</dbReference>
<dbReference type="Pfam" id="PF00202">
    <property type="entry name" value="Aminotran_3"/>
    <property type="match status" value="1"/>
</dbReference>
<dbReference type="PIRSF" id="PIRSF000521">
    <property type="entry name" value="Transaminase_4ab_Lys_Orn"/>
    <property type="match status" value="1"/>
</dbReference>
<dbReference type="SUPFAM" id="SSF53383">
    <property type="entry name" value="PLP-dependent transferases"/>
    <property type="match status" value="1"/>
</dbReference>
<dbReference type="PROSITE" id="PS00600">
    <property type="entry name" value="AA_TRANSFER_CLASS_3"/>
    <property type="match status" value="1"/>
</dbReference>